<proteinExistence type="inferred from homology"/>
<keyword id="KW-0963">Cytoplasm</keyword>
<keyword id="KW-0210">Decarboxylase</keyword>
<keyword id="KW-0456">Lyase</keyword>
<keyword id="KW-0627">Porphyrin biosynthesis</keyword>
<keyword id="KW-1185">Reference proteome</keyword>
<evidence type="ECO:0000255" key="1">
    <source>
        <dbReference type="HAMAP-Rule" id="MF_00218"/>
    </source>
</evidence>
<protein>
    <recommendedName>
        <fullName evidence="1">Uroporphyrinogen decarboxylase</fullName>
        <shortName evidence="1">UPD</shortName>
        <shortName evidence="1">URO-D</shortName>
        <ecNumber evidence="1">4.1.1.37</ecNumber>
    </recommendedName>
</protein>
<organism>
    <name type="scientific">Neisseria gonorrhoeae (strain ATCC 700825 / FA 1090)</name>
    <dbReference type="NCBI Taxonomy" id="242231"/>
    <lineage>
        <taxon>Bacteria</taxon>
        <taxon>Pseudomonadati</taxon>
        <taxon>Pseudomonadota</taxon>
        <taxon>Betaproteobacteria</taxon>
        <taxon>Neisseriales</taxon>
        <taxon>Neisseriaceae</taxon>
        <taxon>Neisseria</taxon>
    </lineage>
</organism>
<reference key="1">
    <citation type="submission" date="2003-03" db="EMBL/GenBank/DDBJ databases">
        <title>The complete genome sequence of Neisseria gonorrhoeae.</title>
        <authorList>
            <person name="Lewis L.A."/>
            <person name="Gillaspy A.F."/>
            <person name="McLaughlin R.E."/>
            <person name="Gipson M."/>
            <person name="Ducey T.F."/>
            <person name="Ownbey T."/>
            <person name="Hartman K."/>
            <person name="Nydick C."/>
            <person name="Carson M.B."/>
            <person name="Vaughn J."/>
            <person name="Thomson C."/>
            <person name="Song L."/>
            <person name="Lin S."/>
            <person name="Yuan X."/>
            <person name="Najar F."/>
            <person name="Zhan M."/>
            <person name="Ren Q."/>
            <person name="Zhu H."/>
            <person name="Qi S."/>
            <person name="Kenton S.M."/>
            <person name="Lai H."/>
            <person name="White J.D."/>
            <person name="Clifton S."/>
            <person name="Roe B.A."/>
            <person name="Dyer D.W."/>
        </authorList>
    </citation>
    <scope>NUCLEOTIDE SEQUENCE [LARGE SCALE GENOMIC DNA]</scope>
    <source>
        <strain>ATCC 700825 / FA 1090</strain>
    </source>
</reference>
<gene>
    <name evidence="1" type="primary">hemE</name>
    <name type="ordered locus">NGO_0362</name>
</gene>
<accession>Q5F9N1</accession>
<comment type="function">
    <text evidence="1">Catalyzes the decarboxylation of four acetate groups of uroporphyrinogen-III to yield coproporphyrinogen-III.</text>
</comment>
<comment type="catalytic activity">
    <reaction evidence="1">
        <text>uroporphyrinogen III + 4 H(+) = coproporphyrinogen III + 4 CO2</text>
        <dbReference type="Rhea" id="RHEA:19865"/>
        <dbReference type="ChEBI" id="CHEBI:15378"/>
        <dbReference type="ChEBI" id="CHEBI:16526"/>
        <dbReference type="ChEBI" id="CHEBI:57308"/>
        <dbReference type="ChEBI" id="CHEBI:57309"/>
        <dbReference type="EC" id="4.1.1.37"/>
    </reaction>
</comment>
<comment type="pathway">
    <text evidence="1">Porphyrin-containing compound metabolism; protoporphyrin-IX biosynthesis; coproporphyrinogen-III from 5-aminolevulinate: step 4/4.</text>
</comment>
<comment type="subunit">
    <text evidence="1">Homodimer.</text>
</comment>
<comment type="subcellular location">
    <subcellularLocation>
        <location evidence="1">Cytoplasm</location>
    </subcellularLocation>
</comment>
<comment type="similarity">
    <text evidence="1">Belongs to the uroporphyrinogen decarboxylase family.</text>
</comment>
<feature type="chain" id="PRO_1000023927" description="Uroporphyrinogen decarboxylase">
    <location>
        <begin position="1"/>
        <end position="354"/>
    </location>
</feature>
<feature type="binding site" evidence="1">
    <location>
        <begin position="27"/>
        <end position="31"/>
    </location>
    <ligand>
        <name>substrate</name>
    </ligand>
</feature>
<feature type="binding site" evidence="1">
    <location>
        <position position="77"/>
    </location>
    <ligand>
        <name>substrate</name>
    </ligand>
</feature>
<feature type="binding site" evidence="1">
    <location>
        <position position="153"/>
    </location>
    <ligand>
        <name>substrate</name>
    </ligand>
</feature>
<feature type="binding site" evidence="1">
    <location>
        <position position="208"/>
    </location>
    <ligand>
        <name>substrate</name>
    </ligand>
</feature>
<feature type="binding site" evidence="1">
    <location>
        <position position="326"/>
    </location>
    <ligand>
        <name>substrate</name>
    </ligand>
</feature>
<feature type="site" description="Transition state stabilizer" evidence="1">
    <location>
        <position position="77"/>
    </location>
</feature>
<sequence>MTLLKNDTFLRALLKQPVEYTPIWMMRQAGRYLPEYKATRTKAGSFLDLCKNTGLATEVTIQPLERFDLDAAILFSDILTVPDAMGLGLYFAEGEGPKFKRALQHESDIAKLHVPDMEKLQYVFDAVTSIRKALDGRVPLIGFSGSPFTLACYMVEGGGSKEFRTIKTMMYSRPDLLYKILDTNAQAVTAYLNAQIDAGAQAVQIFDTWGGVLSDAAFKEFSLKYIRQIVAGLKRESEGRRVPVIVFAKGGGLWLESMAQIGADALGLDWTCNIGEARRRVGNQVALQGNFDPSALFGTPESIRTEVARILTGYGHGSGHVFNLGHGINQHADPEHAKILVDTVHELSRQYHGG</sequence>
<dbReference type="EC" id="4.1.1.37" evidence="1"/>
<dbReference type="EMBL" id="AE004969">
    <property type="protein sequence ID" value="AAW89106.1"/>
    <property type="molecule type" value="Genomic_DNA"/>
</dbReference>
<dbReference type="RefSeq" id="WP_003706638.1">
    <property type="nucleotide sequence ID" value="NC_002946.2"/>
</dbReference>
<dbReference type="RefSeq" id="YP_207518.1">
    <property type="nucleotide sequence ID" value="NC_002946.2"/>
</dbReference>
<dbReference type="SMR" id="Q5F9N1"/>
<dbReference type="STRING" id="242231.NGO_0362"/>
<dbReference type="KEGG" id="ngo:NGO_0362"/>
<dbReference type="PATRIC" id="fig|242231.10.peg.437"/>
<dbReference type="HOGENOM" id="CLU_040933_0_0_4"/>
<dbReference type="UniPathway" id="UPA00251">
    <property type="reaction ID" value="UER00321"/>
</dbReference>
<dbReference type="Proteomes" id="UP000000535">
    <property type="component" value="Chromosome"/>
</dbReference>
<dbReference type="GO" id="GO:0005829">
    <property type="term" value="C:cytosol"/>
    <property type="evidence" value="ECO:0007669"/>
    <property type="project" value="TreeGrafter"/>
</dbReference>
<dbReference type="GO" id="GO:0004853">
    <property type="term" value="F:uroporphyrinogen decarboxylase activity"/>
    <property type="evidence" value="ECO:0007669"/>
    <property type="project" value="UniProtKB-UniRule"/>
</dbReference>
<dbReference type="GO" id="GO:0019353">
    <property type="term" value="P:protoporphyrinogen IX biosynthetic process from glutamate"/>
    <property type="evidence" value="ECO:0007669"/>
    <property type="project" value="TreeGrafter"/>
</dbReference>
<dbReference type="CDD" id="cd00717">
    <property type="entry name" value="URO-D"/>
    <property type="match status" value="1"/>
</dbReference>
<dbReference type="FunFam" id="3.20.20.210:FF:000001">
    <property type="entry name" value="Uroporphyrinogen decarboxylase"/>
    <property type="match status" value="1"/>
</dbReference>
<dbReference type="Gene3D" id="3.20.20.210">
    <property type="match status" value="1"/>
</dbReference>
<dbReference type="HAMAP" id="MF_00218">
    <property type="entry name" value="URO_D"/>
    <property type="match status" value="1"/>
</dbReference>
<dbReference type="InterPro" id="IPR038071">
    <property type="entry name" value="UROD/MetE-like_sf"/>
</dbReference>
<dbReference type="InterPro" id="IPR006361">
    <property type="entry name" value="Uroporphyrinogen_deCO2ase_HemE"/>
</dbReference>
<dbReference type="InterPro" id="IPR000257">
    <property type="entry name" value="Uroporphyrinogen_deCOase"/>
</dbReference>
<dbReference type="NCBIfam" id="TIGR01464">
    <property type="entry name" value="hemE"/>
    <property type="match status" value="1"/>
</dbReference>
<dbReference type="PANTHER" id="PTHR21091">
    <property type="entry name" value="METHYLTETRAHYDROFOLATE:HOMOCYSTEINE METHYLTRANSFERASE RELATED"/>
    <property type="match status" value="1"/>
</dbReference>
<dbReference type="PANTHER" id="PTHR21091:SF169">
    <property type="entry name" value="UROPORPHYRINOGEN DECARBOXYLASE"/>
    <property type="match status" value="1"/>
</dbReference>
<dbReference type="Pfam" id="PF01208">
    <property type="entry name" value="URO-D"/>
    <property type="match status" value="1"/>
</dbReference>
<dbReference type="SUPFAM" id="SSF51726">
    <property type="entry name" value="UROD/MetE-like"/>
    <property type="match status" value="1"/>
</dbReference>
<dbReference type="PROSITE" id="PS00906">
    <property type="entry name" value="UROD_1"/>
    <property type="match status" value="1"/>
</dbReference>
<dbReference type="PROSITE" id="PS00907">
    <property type="entry name" value="UROD_2"/>
    <property type="match status" value="1"/>
</dbReference>
<name>DCUP_NEIG1</name>